<name>PNP_ALISL</name>
<evidence type="ECO:0000255" key="1">
    <source>
        <dbReference type="HAMAP-Rule" id="MF_01595"/>
    </source>
</evidence>
<evidence type="ECO:0000305" key="2"/>
<keyword id="KW-0963">Cytoplasm</keyword>
<keyword id="KW-0460">Magnesium</keyword>
<keyword id="KW-0479">Metal-binding</keyword>
<keyword id="KW-0548">Nucleotidyltransferase</keyword>
<keyword id="KW-0694">RNA-binding</keyword>
<keyword id="KW-0808">Transferase</keyword>
<feature type="chain" id="PRO_0000381864" description="Polyribonucleotide nucleotidyltransferase">
    <location>
        <begin position="1"/>
        <end position="709"/>
    </location>
</feature>
<feature type="domain" description="KH" evidence="1">
    <location>
        <begin position="554"/>
        <end position="613"/>
    </location>
</feature>
<feature type="domain" description="S1 motif" evidence="1">
    <location>
        <begin position="623"/>
        <end position="691"/>
    </location>
</feature>
<feature type="binding site" evidence="1">
    <location>
        <position position="487"/>
    </location>
    <ligand>
        <name>Mg(2+)</name>
        <dbReference type="ChEBI" id="CHEBI:18420"/>
    </ligand>
</feature>
<feature type="binding site" evidence="1">
    <location>
        <position position="493"/>
    </location>
    <ligand>
        <name>Mg(2+)</name>
        <dbReference type="ChEBI" id="CHEBI:18420"/>
    </ligand>
</feature>
<sequence>MFEKPVVKSFQYGNHTVTLETGVMARQATAAVMASMDDTSVFVSVVAKKEAVAGQDFFPLTVNYQERTYAAGKIPGGFFKREGRPSEGETLTARLIDRPIRPLFPSAFKNEVQVIATVVSINPDVNPDMITMIATSAALSIAGVPFNGPIGAARVGHINGELVLNPSNTELANSKLDLVVSGTEAAVLMVESEADNLSEEEMLSAVVFGHDQQQVVIKAINEFAAEVATPSWNWEAPVVNAELKAQVAELAETRLSEAYQITEKMARYEQVGAIKSEVVAALLVQNEALDEREIRGMLGALEKNVVRSRIIAGHPRIDGREKDMVRALDVRTGVLPRTHGSALFTRGETQALVTATLGTQRDAQIIDSLMGEKKDHFLLHYNFPPYCVGETGFVGSPKRREIGHGKLAKRGIAAVMPSVEEFPYTVRVVSEITESNGSSSMASVCGTSLALMDAGVPIKASVAGIAMGLVKEGDDFVVLSDILGDEDHLGDMDFKVAGTNAGITALQMDIKIEGITKEIMQIALNQAQGARKHILTVMDEAISGAREDISQYAPRIHTMKISSDKIKDVIGKGGAVIRALCEETGTTIEIEDDGTIKIAATEGAAAKEAIRRIEEITAEVEVGKIYPGKVMRIVDFGAFVTVLGPKEGLVHISQIAEERIEKVADHLQVGQEVQTKVLEIDRQGRIRLSIKEATAELNPVAATEVKDAE</sequence>
<comment type="function">
    <text evidence="1">Involved in mRNA degradation. Catalyzes the phosphorolysis of single-stranded polyribonucleotides processively in the 3'- to 5'-direction.</text>
</comment>
<comment type="catalytic activity">
    <reaction evidence="1">
        <text>RNA(n+1) + phosphate = RNA(n) + a ribonucleoside 5'-diphosphate</text>
        <dbReference type="Rhea" id="RHEA:22096"/>
        <dbReference type="Rhea" id="RHEA-COMP:14527"/>
        <dbReference type="Rhea" id="RHEA-COMP:17342"/>
        <dbReference type="ChEBI" id="CHEBI:43474"/>
        <dbReference type="ChEBI" id="CHEBI:57930"/>
        <dbReference type="ChEBI" id="CHEBI:140395"/>
        <dbReference type="EC" id="2.7.7.8"/>
    </reaction>
</comment>
<comment type="cofactor">
    <cofactor evidence="1">
        <name>Mg(2+)</name>
        <dbReference type="ChEBI" id="CHEBI:18420"/>
    </cofactor>
</comment>
<comment type="subunit">
    <text evidence="1">Component of the RNA degradosome, which is a multiprotein complex involved in RNA processing and mRNA degradation.</text>
</comment>
<comment type="subcellular location">
    <subcellularLocation>
        <location evidence="1">Cytoplasm</location>
    </subcellularLocation>
</comment>
<comment type="similarity">
    <text evidence="1">Belongs to the polyribonucleotide nucleotidyltransferase family.</text>
</comment>
<comment type="sequence caution" evidence="2">
    <conflict type="erroneous initiation">
        <sequence resource="EMBL-CDS" id="CAQ78287"/>
    </conflict>
</comment>
<reference key="1">
    <citation type="journal article" date="2008" name="BMC Genomics">
        <title>The genome sequence of the fish pathogen Aliivibrio salmonicida strain LFI1238 shows extensive evidence of gene decay.</title>
        <authorList>
            <person name="Hjerde E."/>
            <person name="Lorentzen M.S."/>
            <person name="Holden M.T."/>
            <person name="Seeger K."/>
            <person name="Paulsen S."/>
            <person name="Bason N."/>
            <person name="Churcher C."/>
            <person name="Harris D."/>
            <person name="Norbertczak H."/>
            <person name="Quail M.A."/>
            <person name="Sanders S."/>
            <person name="Thurston S."/>
            <person name="Parkhill J."/>
            <person name="Willassen N.P."/>
            <person name="Thomson N.R."/>
        </authorList>
    </citation>
    <scope>NUCLEOTIDE SEQUENCE [LARGE SCALE GENOMIC DNA]</scope>
    <source>
        <strain>LFI1238</strain>
    </source>
</reference>
<accession>B6ENE6</accession>
<organism>
    <name type="scientific">Aliivibrio salmonicida (strain LFI1238)</name>
    <name type="common">Vibrio salmonicida (strain LFI1238)</name>
    <dbReference type="NCBI Taxonomy" id="316275"/>
    <lineage>
        <taxon>Bacteria</taxon>
        <taxon>Pseudomonadati</taxon>
        <taxon>Pseudomonadota</taxon>
        <taxon>Gammaproteobacteria</taxon>
        <taxon>Vibrionales</taxon>
        <taxon>Vibrionaceae</taxon>
        <taxon>Aliivibrio</taxon>
    </lineage>
</organism>
<protein>
    <recommendedName>
        <fullName evidence="1">Polyribonucleotide nucleotidyltransferase</fullName>
        <ecNumber evidence="1">2.7.7.8</ecNumber>
    </recommendedName>
    <alternativeName>
        <fullName evidence="1">Polynucleotide phosphorylase</fullName>
        <shortName evidence="1">PNPase</shortName>
    </alternativeName>
</protein>
<dbReference type="EC" id="2.7.7.8" evidence="1"/>
<dbReference type="EMBL" id="FM178379">
    <property type="protein sequence ID" value="CAQ78287.1"/>
    <property type="status" value="ALT_INIT"/>
    <property type="molecule type" value="Genomic_DNA"/>
</dbReference>
<dbReference type="RefSeq" id="WP_044583183.1">
    <property type="nucleotide sequence ID" value="NC_011312.1"/>
</dbReference>
<dbReference type="SMR" id="B6ENE6"/>
<dbReference type="KEGG" id="vsa:VSAL_I0602"/>
<dbReference type="eggNOG" id="COG1185">
    <property type="taxonomic scope" value="Bacteria"/>
</dbReference>
<dbReference type="HOGENOM" id="CLU_004217_2_2_6"/>
<dbReference type="Proteomes" id="UP000001730">
    <property type="component" value="Chromosome 1"/>
</dbReference>
<dbReference type="GO" id="GO:0005829">
    <property type="term" value="C:cytosol"/>
    <property type="evidence" value="ECO:0007669"/>
    <property type="project" value="TreeGrafter"/>
</dbReference>
<dbReference type="GO" id="GO:0000175">
    <property type="term" value="F:3'-5'-RNA exonuclease activity"/>
    <property type="evidence" value="ECO:0007669"/>
    <property type="project" value="TreeGrafter"/>
</dbReference>
<dbReference type="GO" id="GO:0000287">
    <property type="term" value="F:magnesium ion binding"/>
    <property type="evidence" value="ECO:0007669"/>
    <property type="project" value="UniProtKB-UniRule"/>
</dbReference>
<dbReference type="GO" id="GO:0004654">
    <property type="term" value="F:polyribonucleotide nucleotidyltransferase activity"/>
    <property type="evidence" value="ECO:0007669"/>
    <property type="project" value="UniProtKB-UniRule"/>
</dbReference>
<dbReference type="GO" id="GO:0003723">
    <property type="term" value="F:RNA binding"/>
    <property type="evidence" value="ECO:0007669"/>
    <property type="project" value="UniProtKB-UniRule"/>
</dbReference>
<dbReference type="GO" id="GO:0006402">
    <property type="term" value="P:mRNA catabolic process"/>
    <property type="evidence" value="ECO:0007669"/>
    <property type="project" value="UniProtKB-UniRule"/>
</dbReference>
<dbReference type="GO" id="GO:0006396">
    <property type="term" value="P:RNA processing"/>
    <property type="evidence" value="ECO:0007669"/>
    <property type="project" value="InterPro"/>
</dbReference>
<dbReference type="CDD" id="cd02393">
    <property type="entry name" value="KH-I_PNPase"/>
    <property type="match status" value="1"/>
</dbReference>
<dbReference type="CDD" id="cd11363">
    <property type="entry name" value="RNase_PH_PNPase_1"/>
    <property type="match status" value="1"/>
</dbReference>
<dbReference type="CDD" id="cd11364">
    <property type="entry name" value="RNase_PH_PNPase_2"/>
    <property type="match status" value="1"/>
</dbReference>
<dbReference type="CDD" id="cd04472">
    <property type="entry name" value="S1_PNPase"/>
    <property type="match status" value="1"/>
</dbReference>
<dbReference type="FunFam" id="2.40.50.140:FF:000023">
    <property type="entry name" value="Polyribonucleotide nucleotidyltransferase"/>
    <property type="match status" value="1"/>
</dbReference>
<dbReference type="FunFam" id="3.30.1370.10:FF:000001">
    <property type="entry name" value="Polyribonucleotide nucleotidyltransferase"/>
    <property type="match status" value="1"/>
</dbReference>
<dbReference type="FunFam" id="3.30.230.70:FF:000001">
    <property type="entry name" value="Polyribonucleotide nucleotidyltransferase"/>
    <property type="match status" value="1"/>
</dbReference>
<dbReference type="FunFam" id="3.30.230.70:FF:000002">
    <property type="entry name" value="Polyribonucleotide nucleotidyltransferase"/>
    <property type="match status" value="1"/>
</dbReference>
<dbReference type="Gene3D" id="3.30.230.70">
    <property type="entry name" value="GHMP Kinase, N-terminal domain"/>
    <property type="match status" value="2"/>
</dbReference>
<dbReference type="Gene3D" id="3.30.1370.10">
    <property type="entry name" value="K Homology domain, type 1"/>
    <property type="match status" value="1"/>
</dbReference>
<dbReference type="Gene3D" id="2.40.50.140">
    <property type="entry name" value="Nucleic acid-binding proteins"/>
    <property type="match status" value="1"/>
</dbReference>
<dbReference type="HAMAP" id="MF_01595">
    <property type="entry name" value="PNPase"/>
    <property type="match status" value="1"/>
</dbReference>
<dbReference type="InterPro" id="IPR001247">
    <property type="entry name" value="ExoRNase_PH_dom1"/>
</dbReference>
<dbReference type="InterPro" id="IPR015847">
    <property type="entry name" value="ExoRNase_PH_dom2"/>
</dbReference>
<dbReference type="InterPro" id="IPR036345">
    <property type="entry name" value="ExoRNase_PH_dom2_sf"/>
</dbReference>
<dbReference type="InterPro" id="IPR004087">
    <property type="entry name" value="KH_dom"/>
</dbReference>
<dbReference type="InterPro" id="IPR004088">
    <property type="entry name" value="KH_dom_type_1"/>
</dbReference>
<dbReference type="InterPro" id="IPR036612">
    <property type="entry name" value="KH_dom_type_1_sf"/>
</dbReference>
<dbReference type="InterPro" id="IPR012340">
    <property type="entry name" value="NA-bd_OB-fold"/>
</dbReference>
<dbReference type="InterPro" id="IPR012162">
    <property type="entry name" value="PNPase"/>
</dbReference>
<dbReference type="InterPro" id="IPR027408">
    <property type="entry name" value="PNPase/RNase_PH_dom_sf"/>
</dbReference>
<dbReference type="InterPro" id="IPR015848">
    <property type="entry name" value="PNPase_PH_RNA-bd_bac/org-type"/>
</dbReference>
<dbReference type="InterPro" id="IPR036456">
    <property type="entry name" value="PNPase_PH_RNA-bd_sf"/>
</dbReference>
<dbReference type="InterPro" id="IPR020568">
    <property type="entry name" value="Ribosomal_Su5_D2-typ_SF"/>
</dbReference>
<dbReference type="InterPro" id="IPR003029">
    <property type="entry name" value="S1_domain"/>
</dbReference>
<dbReference type="NCBIfam" id="TIGR03591">
    <property type="entry name" value="polynuc_phos"/>
    <property type="match status" value="1"/>
</dbReference>
<dbReference type="NCBIfam" id="NF008805">
    <property type="entry name" value="PRK11824.1"/>
    <property type="match status" value="1"/>
</dbReference>
<dbReference type="PANTHER" id="PTHR11252">
    <property type="entry name" value="POLYRIBONUCLEOTIDE NUCLEOTIDYLTRANSFERASE"/>
    <property type="match status" value="1"/>
</dbReference>
<dbReference type="PANTHER" id="PTHR11252:SF0">
    <property type="entry name" value="POLYRIBONUCLEOTIDE NUCLEOTIDYLTRANSFERASE 1, MITOCHONDRIAL"/>
    <property type="match status" value="1"/>
</dbReference>
<dbReference type="Pfam" id="PF00013">
    <property type="entry name" value="KH_1"/>
    <property type="match status" value="1"/>
</dbReference>
<dbReference type="Pfam" id="PF03726">
    <property type="entry name" value="PNPase"/>
    <property type="match status" value="1"/>
</dbReference>
<dbReference type="Pfam" id="PF01138">
    <property type="entry name" value="RNase_PH"/>
    <property type="match status" value="2"/>
</dbReference>
<dbReference type="Pfam" id="PF03725">
    <property type="entry name" value="RNase_PH_C"/>
    <property type="match status" value="2"/>
</dbReference>
<dbReference type="Pfam" id="PF00575">
    <property type="entry name" value="S1"/>
    <property type="match status" value="1"/>
</dbReference>
<dbReference type="PIRSF" id="PIRSF005499">
    <property type="entry name" value="PNPase"/>
    <property type="match status" value="1"/>
</dbReference>
<dbReference type="SMART" id="SM00322">
    <property type="entry name" value="KH"/>
    <property type="match status" value="1"/>
</dbReference>
<dbReference type="SMART" id="SM00316">
    <property type="entry name" value="S1"/>
    <property type="match status" value="1"/>
</dbReference>
<dbReference type="SUPFAM" id="SSF54791">
    <property type="entry name" value="Eukaryotic type KH-domain (KH-domain type I)"/>
    <property type="match status" value="1"/>
</dbReference>
<dbReference type="SUPFAM" id="SSF50249">
    <property type="entry name" value="Nucleic acid-binding proteins"/>
    <property type="match status" value="1"/>
</dbReference>
<dbReference type="SUPFAM" id="SSF46915">
    <property type="entry name" value="Polynucleotide phosphorylase/guanosine pentaphosphate synthase (PNPase/GPSI), domain 3"/>
    <property type="match status" value="1"/>
</dbReference>
<dbReference type="SUPFAM" id="SSF55666">
    <property type="entry name" value="Ribonuclease PH domain 2-like"/>
    <property type="match status" value="2"/>
</dbReference>
<dbReference type="SUPFAM" id="SSF54211">
    <property type="entry name" value="Ribosomal protein S5 domain 2-like"/>
    <property type="match status" value="2"/>
</dbReference>
<dbReference type="PROSITE" id="PS50084">
    <property type="entry name" value="KH_TYPE_1"/>
    <property type="match status" value="1"/>
</dbReference>
<dbReference type="PROSITE" id="PS50126">
    <property type="entry name" value="S1"/>
    <property type="match status" value="1"/>
</dbReference>
<gene>
    <name evidence="1" type="primary">pnp</name>
    <name type="ordered locus">VSAL_I0602</name>
</gene>
<proteinExistence type="inferred from homology"/>